<name>KCNG4_MOUSE</name>
<gene>
    <name evidence="4" type="primary">Kcng4</name>
</gene>
<feature type="chain" id="PRO_0000320142" description="Voltage-gated potassium channel regulatory subunit KCNG4">
    <location>
        <begin position="1"/>
        <end position="506"/>
    </location>
</feature>
<feature type="topological domain" description="Cytoplasmic" evidence="1">
    <location>
        <begin position="1"/>
        <end position="216"/>
    </location>
</feature>
<feature type="transmembrane region" description="Helical; Name=Segment S1" evidence="1">
    <location>
        <begin position="217"/>
        <end position="238"/>
    </location>
</feature>
<feature type="topological domain" description="Extracellular" evidence="1">
    <location>
        <begin position="239"/>
        <end position="259"/>
    </location>
</feature>
<feature type="transmembrane region" description="Helical; Name=Segment S2" evidence="1">
    <location>
        <begin position="260"/>
        <end position="281"/>
    </location>
</feature>
<feature type="topological domain" description="Cytoplasmic" evidence="1">
    <location>
        <begin position="282"/>
        <end position="292"/>
    </location>
</feature>
<feature type="transmembrane region" description="Helical; Name=Segment S3" evidence="1">
    <location>
        <begin position="293"/>
        <end position="312"/>
    </location>
</feature>
<feature type="topological domain" description="Extracellular" evidence="1">
    <location>
        <begin position="313"/>
        <end position="326"/>
    </location>
</feature>
<feature type="transmembrane region" description="Helical; Voltage-sensor; Name=Segment S4" evidence="1">
    <location>
        <begin position="327"/>
        <end position="351"/>
    </location>
</feature>
<feature type="topological domain" description="Cytoplasmic" evidence="1">
    <location>
        <begin position="352"/>
        <end position="366"/>
    </location>
</feature>
<feature type="transmembrane region" description="Helical; Name=Segment S5" evidence="1">
    <location>
        <begin position="367"/>
        <end position="388"/>
    </location>
</feature>
<feature type="topological domain" description="Extracellular" evidence="1">
    <location>
        <begin position="389"/>
        <end position="403"/>
    </location>
</feature>
<feature type="intramembrane region" description="Helical; Name=Pore helix" evidence="1">
    <location>
        <begin position="404"/>
        <end position="415"/>
    </location>
</feature>
<feature type="intramembrane region" evidence="1">
    <location>
        <begin position="416"/>
        <end position="423"/>
    </location>
</feature>
<feature type="topological domain" description="Extracellular" evidence="1">
    <location>
        <begin position="424"/>
        <end position="430"/>
    </location>
</feature>
<feature type="transmembrane region" description="Helical; Name=Segment S6" evidence="1">
    <location>
        <begin position="431"/>
        <end position="459"/>
    </location>
</feature>
<feature type="topological domain" description="Cytoplasmic" evidence="3">
    <location>
        <begin position="460"/>
        <end position="506"/>
    </location>
</feature>
<feature type="short sequence motif" description="Selectivity filter" evidence="1">
    <location>
        <begin position="416"/>
        <end position="421"/>
    </location>
</feature>
<keyword id="KW-1003">Cell membrane</keyword>
<keyword id="KW-0407">Ion channel</keyword>
<keyword id="KW-0406">Ion transport</keyword>
<keyword id="KW-0472">Membrane</keyword>
<keyword id="KW-0630">Potassium</keyword>
<keyword id="KW-0631">Potassium channel</keyword>
<keyword id="KW-0633">Potassium transport</keyword>
<keyword id="KW-1185">Reference proteome</keyword>
<keyword id="KW-0812">Transmembrane</keyword>
<keyword id="KW-1133">Transmembrane helix</keyword>
<keyword id="KW-0813">Transport</keyword>
<keyword id="KW-0851">Voltage-gated channel</keyword>
<comment type="function">
    <text evidence="2">Regulatory subunit of the voltage-gated potassium (Kv) channel which, when coassembled with KCNB1, modulates the kinetics parameters of the heterotetrameric channel namely the time course of activation, deactivation and inactivation and on the voltage-dependence of activation. Potassium channel subunit that does not form functional channels by itself. Reduces the deactivation rate. Modulates the threshold for activation by shifting by approximately 20 mV in hyperpolarizing direction. Markedly changes the inactivation by shifting the voltage dependence of inactivation by approximately 40 mV in hyperpolarizing direction. Acceleratee activation and enhances the time course of activation.</text>
</comment>
<comment type="subunit">
    <text evidence="2">Heterotetramer with KCNB1. Does not form homomultimer.</text>
</comment>
<comment type="subcellular location">
    <subcellularLocation>
        <location evidence="2">Cell membrane</location>
        <topology evidence="2">Multi-pass membrane protein</topology>
    </subcellularLocation>
    <text evidence="2">Has to be associated with KCNB1 or possibly another partner to get inserted in the plasma membrane. Colocalizes with KCNB1 at the plasma membrane. Remains intracellular in the absence of KCNB1.</text>
</comment>
<comment type="domain">
    <text evidence="1">The transmembrane segment S4 functions as a voltage-sensor and is characterized by a series of positively charged amino acids at every third position. Channel opening and closing is effected by a conformation change that affects the position and orientation of the voltage-sensor paddle formed by S3 and S4 within the membrane. A transmembrane electric field that is positive inside would push the positively charged S4 segment outwards, thereby opening the pore, while a field that is negative inside would pull the S4 segment inwards and close the pore. Changes in the position and orientation of S4 are then transmitted to the activation gate formed by the inner helix bundle via the S4-S5 linker region.</text>
</comment>
<comment type="similarity">
    <text evidence="3">Belongs to the potassium channel family. G (TC 1.A.1.2) subfamily. Kv6.4/KCNG4 sub-subfamily.</text>
</comment>
<proteinExistence type="evidence at transcript level"/>
<accession>Q80XM3</accession>
<sequence length="506" mass="57177">MPMSSRDRDLHPGHHHFGSCSPLSQLWPGPEPKSVKGLYYSRARKVGNQDASPEANLKEILVNVGGQRYLLPWSTLDAFPLSRLSRLRLCRSHEEITQLCDDYDEDSQEFFFDRNPSAFGVIVSFLAAGKLVLLREMCALSFREELSYWGIEETNLERCCLRKLLKKLEEAAELRREEAAQRQQQRQACHSEVQASRWARSMNQLREMVEDPQSGLPGKVFACLSVLFVATTAVSLCVSTMPDFRAEEGKGECTRKCYYIFVVESICVAWFSLEFCLRFVQAPNKCQFFRGPLNVIDILAISPYYVSLAVSDESPEAGERPSSSSYLEKVGLVLRVLRALRILYVMRLARHSLGLQTLGLTVRRCAREFGLLMLFLAVAVTLFSPLVYVAENESGRVLEFTSIPASYWWAIISMTTVGYGDMVPRSVPGQMVALSSILSGILIMAFPATSIFHTFSHSYLELKREQEQVQARLRRLQNTNSASERELLSDVDDLVPEGLTSPGRYM</sequence>
<organism>
    <name type="scientific">Mus musculus</name>
    <name type="common">Mouse</name>
    <dbReference type="NCBI Taxonomy" id="10090"/>
    <lineage>
        <taxon>Eukaryota</taxon>
        <taxon>Metazoa</taxon>
        <taxon>Chordata</taxon>
        <taxon>Craniata</taxon>
        <taxon>Vertebrata</taxon>
        <taxon>Euteleostomi</taxon>
        <taxon>Mammalia</taxon>
        <taxon>Eutheria</taxon>
        <taxon>Euarchontoglires</taxon>
        <taxon>Glires</taxon>
        <taxon>Rodentia</taxon>
        <taxon>Myomorpha</taxon>
        <taxon>Muroidea</taxon>
        <taxon>Muridae</taxon>
        <taxon>Murinae</taxon>
        <taxon>Mus</taxon>
        <taxon>Mus</taxon>
    </lineage>
</organism>
<dbReference type="EMBL" id="BC043936">
    <property type="protein sequence ID" value="AAH43936.1"/>
    <property type="molecule type" value="mRNA"/>
</dbReference>
<dbReference type="EMBL" id="AF450109">
    <property type="protein sequence ID" value="AAP46290.1"/>
    <property type="molecule type" value="mRNA"/>
</dbReference>
<dbReference type="CCDS" id="CCDS22710.1"/>
<dbReference type="RefSeq" id="NP_080010.2">
    <property type="nucleotide sequence ID" value="NM_025734.2"/>
</dbReference>
<dbReference type="RefSeq" id="XP_006531352.1">
    <property type="nucleotide sequence ID" value="XM_006531289.5"/>
</dbReference>
<dbReference type="SMR" id="Q80XM3"/>
<dbReference type="FunCoup" id="Q80XM3">
    <property type="interactions" value="11"/>
</dbReference>
<dbReference type="STRING" id="10090.ENSMUSP00000056552"/>
<dbReference type="iPTMnet" id="Q80XM3"/>
<dbReference type="PhosphoSitePlus" id="Q80XM3"/>
<dbReference type="PaxDb" id="10090-ENSMUSP00000056552"/>
<dbReference type="ProteomicsDB" id="263495"/>
<dbReference type="ABCD" id="Q80XM3">
    <property type="antibodies" value="1 sequenced antibody"/>
</dbReference>
<dbReference type="Antibodypedia" id="30581">
    <property type="antibodies" value="100 antibodies from 25 providers"/>
</dbReference>
<dbReference type="DNASU" id="66733"/>
<dbReference type="Ensembl" id="ENSMUST00000061828.10">
    <property type="protein sequence ID" value="ENSMUSP00000056552.4"/>
    <property type="gene ID" value="ENSMUSG00000045246.13"/>
</dbReference>
<dbReference type="GeneID" id="66733"/>
<dbReference type="KEGG" id="mmu:66733"/>
<dbReference type="UCSC" id="uc009nqb.1">
    <property type="organism name" value="mouse"/>
</dbReference>
<dbReference type="AGR" id="MGI:1913983"/>
<dbReference type="CTD" id="93107"/>
<dbReference type="MGI" id="MGI:1913983">
    <property type="gene designation" value="Kcng4"/>
</dbReference>
<dbReference type="VEuPathDB" id="HostDB:ENSMUSG00000045246"/>
<dbReference type="eggNOG" id="KOG3713">
    <property type="taxonomic scope" value="Eukaryota"/>
</dbReference>
<dbReference type="GeneTree" id="ENSGT00940000156938"/>
<dbReference type="HOGENOM" id="CLU_011722_4_1_1"/>
<dbReference type="InParanoid" id="Q80XM3"/>
<dbReference type="OMA" id="VQARNKC"/>
<dbReference type="OrthoDB" id="296522at2759"/>
<dbReference type="PhylomeDB" id="Q80XM3"/>
<dbReference type="TreeFam" id="TF313103"/>
<dbReference type="Reactome" id="R-MMU-1296072">
    <property type="pathway name" value="Voltage gated Potassium channels"/>
</dbReference>
<dbReference type="BioGRID-ORCS" id="66733">
    <property type="hits" value="0 hits in 76 CRISPR screens"/>
</dbReference>
<dbReference type="PRO" id="PR:Q80XM3"/>
<dbReference type="Proteomes" id="UP000000589">
    <property type="component" value="Chromosome 8"/>
</dbReference>
<dbReference type="RNAct" id="Q80XM3">
    <property type="molecule type" value="protein"/>
</dbReference>
<dbReference type="Bgee" id="ENSMUSG00000045246">
    <property type="expression patterns" value="Expressed in facial nucleus and 61 other cell types or tissues"/>
</dbReference>
<dbReference type="GO" id="GO:0005654">
    <property type="term" value="C:nucleoplasm"/>
    <property type="evidence" value="ECO:0007669"/>
    <property type="project" value="Ensembl"/>
</dbReference>
<dbReference type="GO" id="GO:0005886">
    <property type="term" value="C:plasma membrane"/>
    <property type="evidence" value="ECO:0000250"/>
    <property type="project" value="UniProtKB"/>
</dbReference>
<dbReference type="GO" id="GO:0008076">
    <property type="term" value="C:voltage-gated potassium channel complex"/>
    <property type="evidence" value="ECO:0000250"/>
    <property type="project" value="UniProtKB"/>
</dbReference>
<dbReference type="GO" id="GO:0015459">
    <property type="term" value="F:potassium channel regulator activity"/>
    <property type="evidence" value="ECO:0000250"/>
    <property type="project" value="UniProtKB"/>
</dbReference>
<dbReference type="GO" id="GO:0044325">
    <property type="term" value="F:transmembrane transporter binding"/>
    <property type="evidence" value="ECO:0007669"/>
    <property type="project" value="Ensembl"/>
</dbReference>
<dbReference type="GO" id="GO:0005249">
    <property type="term" value="F:voltage-gated potassium channel activity"/>
    <property type="evidence" value="ECO:0007669"/>
    <property type="project" value="InterPro"/>
</dbReference>
<dbReference type="GO" id="GO:0051260">
    <property type="term" value="P:protein homooligomerization"/>
    <property type="evidence" value="ECO:0007669"/>
    <property type="project" value="InterPro"/>
</dbReference>
<dbReference type="GO" id="GO:1901379">
    <property type="term" value="P:regulation of potassium ion transmembrane transport"/>
    <property type="evidence" value="ECO:0000250"/>
    <property type="project" value="UniProtKB"/>
</dbReference>
<dbReference type="FunFam" id="1.20.120.350:FF:000024">
    <property type="entry name" value="Potassium voltage-gated channel subfamily G member 1"/>
    <property type="match status" value="1"/>
</dbReference>
<dbReference type="FunFam" id="1.10.287.70:FF:000005">
    <property type="entry name" value="potassium voltage-gated channel subfamily G member 1"/>
    <property type="match status" value="1"/>
</dbReference>
<dbReference type="FunFam" id="3.30.710.10:FF:000019">
    <property type="entry name" value="Potassium voltage-gated channel, subfamily G, member 1"/>
    <property type="match status" value="1"/>
</dbReference>
<dbReference type="Gene3D" id="1.10.287.70">
    <property type="match status" value="1"/>
</dbReference>
<dbReference type="Gene3D" id="3.30.710.10">
    <property type="entry name" value="Potassium Channel Kv1.1, Chain A"/>
    <property type="match status" value="1"/>
</dbReference>
<dbReference type="Gene3D" id="1.20.120.350">
    <property type="entry name" value="Voltage-gated potassium channels. Chain C"/>
    <property type="match status" value="1"/>
</dbReference>
<dbReference type="InterPro" id="IPR005821">
    <property type="entry name" value="Ion_trans_dom"/>
</dbReference>
<dbReference type="InterPro" id="IPR003968">
    <property type="entry name" value="K_chnl_volt-dep_Kv"/>
</dbReference>
<dbReference type="InterPro" id="IPR003971">
    <property type="entry name" value="K_chnl_volt-dep_Kv5/Kv9"/>
</dbReference>
<dbReference type="InterPro" id="IPR011333">
    <property type="entry name" value="SKP1/BTB/POZ_sf"/>
</dbReference>
<dbReference type="InterPro" id="IPR003131">
    <property type="entry name" value="T1-type_BTB"/>
</dbReference>
<dbReference type="InterPro" id="IPR028325">
    <property type="entry name" value="VG_K_chnl"/>
</dbReference>
<dbReference type="InterPro" id="IPR027359">
    <property type="entry name" value="Volt_channel_dom_sf"/>
</dbReference>
<dbReference type="PANTHER" id="PTHR11537:SF167">
    <property type="entry name" value="POTASSIUM VOLTAGE-GATED CHANNEL SUBFAMILY G MEMBER 4"/>
    <property type="match status" value="1"/>
</dbReference>
<dbReference type="PANTHER" id="PTHR11537">
    <property type="entry name" value="VOLTAGE-GATED POTASSIUM CHANNEL"/>
    <property type="match status" value="1"/>
</dbReference>
<dbReference type="Pfam" id="PF02214">
    <property type="entry name" value="BTB_2"/>
    <property type="match status" value="1"/>
</dbReference>
<dbReference type="Pfam" id="PF00520">
    <property type="entry name" value="Ion_trans"/>
    <property type="match status" value="1"/>
</dbReference>
<dbReference type="PRINTS" id="PR00169">
    <property type="entry name" value="KCHANNEL"/>
</dbReference>
<dbReference type="PRINTS" id="PR01494">
    <property type="entry name" value="KV9CHANNEL"/>
</dbReference>
<dbReference type="PRINTS" id="PR01491">
    <property type="entry name" value="KVCHANNEL"/>
</dbReference>
<dbReference type="SUPFAM" id="SSF54695">
    <property type="entry name" value="POZ domain"/>
    <property type="match status" value="1"/>
</dbReference>
<dbReference type="SUPFAM" id="SSF81324">
    <property type="entry name" value="Voltage-gated potassium channels"/>
    <property type="match status" value="1"/>
</dbReference>
<protein>
    <recommendedName>
        <fullName evidence="3">Voltage-gated potassium channel regulatory subunit KCNG4</fullName>
    </recommendedName>
    <alternativeName>
        <fullName>Potassium voltage-gated channel subfamily G member 4</fullName>
    </alternativeName>
    <alternativeName>
        <fullName evidence="2">Voltage-gated potassium channel subunit Kv6.3</fullName>
    </alternativeName>
    <alternativeName>
        <fullName evidence="2">Voltage-gated potassium channel subunit Kv6.4</fullName>
    </alternativeName>
</protein>
<evidence type="ECO:0000250" key="1">
    <source>
        <dbReference type="UniProtKB" id="P63142"/>
    </source>
</evidence>
<evidence type="ECO:0000250" key="2">
    <source>
        <dbReference type="UniProtKB" id="Q8TDN1"/>
    </source>
</evidence>
<evidence type="ECO:0000305" key="3"/>
<evidence type="ECO:0000312" key="4">
    <source>
        <dbReference type="MGI" id="MGI:1913983"/>
    </source>
</evidence>
<reference key="1">
    <citation type="submission" date="2001-11" db="EMBL/GenBank/DDBJ databases">
        <title>Cloning and characterization of two novel gamma Kv subunits.</title>
        <authorList>
            <person name="Preisig-Mueller R."/>
            <person name="Derst C."/>
            <person name="Schnitzler M.M."/>
            <person name="Daut J."/>
        </authorList>
    </citation>
    <scope>NUCLEOTIDE SEQUENCE [MRNA]</scope>
</reference>
<reference key="2">
    <citation type="journal article" date="2004" name="Genome Res.">
        <title>The status, quality, and expansion of the NIH full-length cDNA project: the Mammalian Gene Collection (MGC).</title>
        <authorList>
            <consortium name="The MGC Project Team"/>
        </authorList>
    </citation>
    <scope>NUCLEOTIDE SEQUENCE [LARGE SCALE MRNA]</scope>
    <source>
        <tissue>Eye</tissue>
    </source>
</reference>